<organism>
    <name type="scientific">Escherichia coli (strain SE11)</name>
    <dbReference type="NCBI Taxonomy" id="409438"/>
    <lineage>
        <taxon>Bacteria</taxon>
        <taxon>Pseudomonadati</taxon>
        <taxon>Pseudomonadota</taxon>
        <taxon>Gammaproteobacteria</taxon>
        <taxon>Enterobacterales</taxon>
        <taxon>Enterobacteriaceae</taxon>
        <taxon>Escherichia</taxon>
    </lineage>
</organism>
<sequence length="62" mass="6946">MKVNDRVTVKTDGGPRRPGVVLAVEEFSEGTMYLVSLEDYPLGIWFFNEAGHQDGIFVEKAE</sequence>
<protein>
    <recommendedName>
        <fullName evidence="1">Protein DsrB</fullName>
    </recommendedName>
</protein>
<evidence type="ECO:0000255" key="1">
    <source>
        <dbReference type="HAMAP-Rule" id="MF_01549"/>
    </source>
</evidence>
<accession>B6I0Z9</accession>
<reference key="1">
    <citation type="journal article" date="2008" name="DNA Res.">
        <title>Complete genome sequence and comparative analysis of the wild-type commensal Escherichia coli strain SE11 isolated from a healthy adult.</title>
        <authorList>
            <person name="Oshima K."/>
            <person name="Toh H."/>
            <person name="Ogura Y."/>
            <person name="Sasamoto H."/>
            <person name="Morita H."/>
            <person name="Park S.-H."/>
            <person name="Ooka T."/>
            <person name="Iyoda S."/>
            <person name="Taylor T.D."/>
            <person name="Hayashi T."/>
            <person name="Itoh K."/>
            <person name="Hattori M."/>
        </authorList>
    </citation>
    <scope>NUCLEOTIDE SEQUENCE [LARGE SCALE GENOMIC DNA]</scope>
    <source>
        <strain>SE11</strain>
    </source>
</reference>
<comment type="similarity">
    <text evidence="1">Belongs to the DsrB family.</text>
</comment>
<feature type="chain" id="PRO_1000146852" description="Protein DsrB">
    <location>
        <begin position="1"/>
        <end position="62"/>
    </location>
</feature>
<gene>
    <name evidence="1" type="primary">dsrB</name>
    <name type="ordered locus">ECSE_2183</name>
</gene>
<name>DSRB_ECOSE</name>
<dbReference type="EMBL" id="AP009240">
    <property type="protein sequence ID" value="BAG77707.1"/>
    <property type="molecule type" value="Genomic_DNA"/>
</dbReference>
<dbReference type="RefSeq" id="WP_000867217.1">
    <property type="nucleotide sequence ID" value="NC_011415.1"/>
</dbReference>
<dbReference type="SMR" id="B6I0Z9"/>
<dbReference type="GeneID" id="93775233"/>
<dbReference type="KEGG" id="ecy:ECSE_2183"/>
<dbReference type="HOGENOM" id="CLU_189289_0_0_6"/>
<dbReference type="Proteomes" id="UP000008199">
    <property type="component" value="Chromosome"/>
</dbReference>
<dbReference type="HAMAP" id="MF_01549">
    <property type="entry name" value="DsrB"/>
    <property type="match status" value="1"/>
</dbReference>
<dbReference type="InterPro" id="IPR019717">
    <property type="entry name" value="Dextransucrase_DSRB"/>
</dbReference>
<dbReference type="NCBIfam" id="NF007981">
    <property type="entry name" value="PRK10708.1"/>
    <property type="match status" value="1"/>
</dbReference>
<dbReference type="Pfam" id="PF10781">
    <property type="entry name" value="DSRB"/>
    <property type="match status" value="1"/>
</dbReference>
<proteinExistence type="inferred from homology"/>